<comment type="function">
    <text evidence="1 2 3 5 7 12">Component of the proteasome core, a large protease complex with broad specificity involved in protein degradation. The M.tuberculosis proteasome is able to cleave oligopeptides not only after hydrophobic but also after basic, acidic and small neutral residues (PubMed:16468985). In complex with the ATPase Mpa, degrades protein targets conjugated to a prokaryotic ubiquitin-like protein (Pup). Among the identified substrates of the M.tuberculosis proteasome are the pupylated FabD, PanB and Mpa proteins (PubMed:17082771). One function of the proteasome is to contribute to M.tuberculosis ability to resist killing by host macrophages, since the core proteasome is essential for persistence of the pathogen during the chronic phase of infection in mice (PubMed:18059281). Likely functions to recycle amino acids under nutrient starvation, thereby enabling the cell to maintain basal metabolic activities (By similarity) (PubMed:20711362). The mechanism of protection against bactericidal chemistries of the host's immune response probably involves the degradation of proteins that are irreversibly oxidized, nitrated, or nitrosated. A proteolysis-independent activity of the proteasome core is required for optimal growth of M.tuberculosis in mouse lungs and for RNI resistance; in contrast, long-term survival of M.tuberculosis in stationary phase and during starvation in vitro and in the chronic phase of mouse infection required a proteolytically active proteasome (PubMed:20711362).</text>
</comment>
<comment type="activity regulation">
    <text evidence="2 3 8 11">The formation of the proteasomal ATPase ARC-20S proteasome complex, likely via the docking of the C-termini of ARC into the intersubunit pockets in the alpha-rings, may trigger opening of the gate for substrate entry. Interconversion between the open-gate and close-gate conformations leads to a dynamic regulation of the 20S proteasome proteolysis activity. In vitro, chymotryptic and tryptic activities of the proteasome are both completely inhibited by epoxomicin and by the peptidyl boronate inhibitor MLN-273. Also inhibited by Mg(2+), Ca(2+) and SDS. It was also shown that certain oxathiazol-2-one compounds can act as selective suicide-substrate inhibitors of the M.tuberculosis proteasome by irreversibly cyclocarbonylating its active site threonine. Proteasome activity is potently inhibited by fellutamide B (Ki=6.8 nM), a lipopeptide aldehyde that forms a reversible bond with the beta-OH of the active site threonine (PubMed:20558127).</text>
</comment>
<comment type="biophysicochemical properties">
    <kinetics>
        <KM evidence="3">56 uM for succinyl-LLVY-7-amino-4-methylcoumarin</KM>
        <Vmax evidence="3">0.24 nmol/min/mg enzyme with succinyl-LLVY-7-amino-4-methylcoumarin as substrate</Vmax>
    </kinetics>
</comment>
<comment type="pathway">
    <text evidence="2">Protein degradation; proteasomal Pup-dependent pathway.</text>
</comment>
<comment type="subunit">
    <text evidence="2 3 4 9 10 14">The 20S proteasome core is composed of 14 alpha and 14 beta subunits that assemble into four stacked heptameric rings, resulting in a barrel-shaped structure. The two inner rings, each composed of seven catalytic beta subunits, are sandwiched by two outer rings, each composed of seven alpha subunits. The catalytic chamber with the active sites is on the inside of the barrel. Has a gated structure, the ends of the cylinder being occluded by the N-termini of the alpha-subunits. Is capped by the proteasome-associated ATPase, ARC (Mpa). Can also interact with the bacterial proteasome activator Bpa through the C-terminal hydrophobic-tyrosine-X motif (HbYX motif) of Bpa; Bpa forms a homooligomeric ring-like structure which stacks co-axially with the proteasomal alpha-rings (PubMed:25469515).</text>
</comment>
<comment type="interaction">
    <interactant intactId="EBI-7948002">
        <id>P9WHU1</id>
    </interactant>
    <interactant intactId="EBI-7947958">
        <id>P9WHT9</id>
        <label>prcB</label>
    </interactant>
    <organismsDiffer>false</organismsDiffer>
    <experiments>6</experiments>
</comment>
<comment type="subcellular location">
    <subcellularLocation>
        <location evidence="2">Cytoplasm</location>
    </subcellularLocation>
</comment>
<comment type="PTM">
    <text evidence="13">Phosphorylated by the PknB kinase at three threonine residues (Thr-84, Thr-202, and Thr-178) in a sequential manner. Phosphorylation enhances proteolytic activity of the proteasome.</text>
</comment>
<comment type="disruption phenotype">
    <text evidence="7 12">Cells lacking the core proteasome prcBA subunits exhibit reduced growth and persistence in mice. They are also attenuated in interferon-gamma-deficient mice. They also display increased sensitivity to reactive nitrogen intermediates (RNI) and increased resistance to oxidative stress.</text>
</comment>
<comment type="biotechnology">
    <text evidence="8">In the course of search for new antibiotics, a class of oxathiazol-2-one compounds has been identified that selectively inhibits the M.tuberculosis proteasome over the human proteasome and that kills non-replicating M.tuberculosis.</text>
</comment>
<comment type="miscellaneous">
    <text>Was identified as a high-confidence drug target.</text>
</comment>
<comment type="similarity">
    <text evidence="2">Belongs to the peptidase T1A family.</text>
</comment>
<sequence length="248" mass="26881">MSFPYFISPEQAMRERSELARKGIARAKSVVALAYAGGVLFVAENPSRSLQKISELYDRVGFAAAGKFNEFDNLRRGGIQFADTRGYAYDRRDVTGRQLANVYAQTLGTIFTEQAKPYEVELCVAEVAHYGETKRPELYRITYDGSIADEPHFVVMGGTTEPIANALKESYAENASLTDALRIAVAALRAGSADTSGGDQPTLGVASLEVAVLDANRPRRAFRRITGSALQALLVDQESPQSDGESSG</sequence>
<evidence type="ECO:0000250" key="1">
    <source>
        <dbReference type="UniProtKB" id="A0QZ46"/>
    </source>
</evidence>
<evidence type="ECO:0000255" key="2">
    <source>
        <dbReference type="HAMAP-Rule" id="MF_00289"/>
    </source>
</evidence>
<evidence type="ECO:0000269" key="3">
    <source>
    </source>
</evidence>
<evidence type="ECO:0000269" key="4">
    <source>
    </source>
</evidence>
<evidence type="ECO:0000269" key="5">
    <source>
    </source>
</evidence>
<evidence type="ECO:0000269" key="6">
    <source>
    </source>
</evidence>
<evidence type="ECO:0000269" key="7">
    <source>
    </source>
</evidence>
<evidence type="ECO:0000269" key="8">
    <source>
    </source>
</evidence>
<evidence type="ECO:0000269" key="9">
    <source>
    </source>
</evidence>
<evidence type="ECO:0000269" key="10">
    <source>
    </source>
</evidence>
<evidence type="ECO:0000269" key="11">
    <source>
    </source>
</evidence>
<evidence type="ECO:0000269" key="12">
    <source>
    </source>
</evidence>
<evidence type="ECO:0000269" key="13">
    <source>
    </source>
</evidence>
<evidence type="ECO:0000269" key="14">
    <source>
    </source>
</evidence>
<evidence type="ECO:0007744" key="15">
    <source>
    </source>
</evidence>
<evidence type="ECO:0007829" key="16">
    <source>
        <dbReference type="PDB" id="3HF9"/>
    </source>
</evidence>
<evidence type="ECO:0007829" key="17">
    <source>
        <dbReference type="PDB" id="3HFA"/>
    </source>
</evidence>
<evidence type="ECO:0007829" key="18">
    <source>
        <dbReference type="PDB" id="3MI0"/>
    </source>
</evidence>
<evidence type="ECO:0007829" key="19">
    <source>
        <dbReference type="PDB" id="6WNK"/>
    </source>
</evidence>
<organism>
    <name type="scientific">Mycobacterium tuberculosis (strain ATCC 25618 / H37Rv)</name>
    <dbReference type="NCBI Taxonomy" id="83332"/>
    <lineage>
        <taxon>Bacteria</taxon>
        <taxon>Bacillati</taxon>
        <taxon>Actinomycetota</taxon>
        <taxon>Actinomycetes</taxon>
        <taxon>Mycobacteriales</taxon>
        <taxon>Mycobacteriaceae</taxon>
        <taxon>Mycobacterium</taxon>
        <taxon>Mycobacterium tuberculosis complex</taxon>
    </lineage>
</organism>
<dbReference type="EMBL" id="AL123456">
    <property type="protein sequence ID" value="CCP44884.1"/>
    <property type="molecule type" value="Genomic_DNA"/>
</dbReference>
<dbReference type="PIR" id="H70511">
    <property type="entry name" value="H70511"/>
</dbReference>
<dbReference type="RefSeq" id="NP_216625.1">
    <property type="nucleotide sequence ID" value="NC_000962.3"/>
</dbReference>
<dbReference type="RefSeq" id="WP_003906749.1">
    <property type="nucleotide sequence ID" value="NZ_NVQJ01000058.1"/>
</dbReference>
<dbReference type="PDB" id="2FHG">
    <property type="method" value="X-ray"/>
    <property type="resolution" value="3.23 A"/>
    <property type="chains" value="1/A/B/D/F/I/K/M/O/Q/S/U/W/Y=2-248"/>
</dbReference>
<dbReference type="PDB" id="2FHH">
    <property type="method" value="X-ray"/>
    <property type="resolution" value="2.99 A"/>
    <property type="chains" value="1/A/B/D/F/I/K/M/O/Q/S/U/W/Y=2-248"/>
</dbReference>
<dbReference type="PDB" id="3H6F">
    <property type="method" value="X-ray"/>
    <property type="resolution" value="2.51 A"/>
    <property type="chains" value="1/A/B/D/F/I/K/M/O/Q/S/U/W/Y=1-248"/>
</dbReference>
<dbReference type="PDB" id="3H6I">
    <property type="method" value="X-ray"/>
    <property type="resolution" value="2.43 A"/>
    <property type="chains" value="1/A/B/D/F/I/K/M/O/Q/S/U/W/Y=1-248"/>
</dbReference>
<dbReference type="PDB" id="3HF9">
    <property type="method" value="X-ray"/>
    <property type="resolution" value="2.88 A"/>
    <property type="chains" value="1/3/A/B/D/F/I/K/M/O/Q/S/U/W/Y/a/b/d/f/i/k/m/o/q/s/u/w/y=10-248"/>
</dbReference>
<dbReference type="PDB" id="3HFA">
    <property type="method" value="X-ray"/>
    <property type="resolution" value="2.50 A"/>
    <property type="chains" value="1/A/B/D/F/I/K/M/O/Q/S/U/W/Y=10-248"/>
</dbReference>
<dbReference type="PDB" id="3KRD">
    <property type="method" value="X-ray"/>
    <property type="resolution" value="2.50 A"/>
    <property type="chains" value="1/A/B/D/F/I/K/M/O/Q/S/U/W/Y=1-248"/>
</dbReference>
<dbReference type="PDB" id="3MFE">
    <property type="method" value="X-ray"/>
    <property type="resolution" value="2.60 A"/>
    <property type="chains" value="1/A/B/D/F/I/K/M/O/Q/S/U/W/Y=10-248"/>
</dbReference>
<dbReference type="PDB" id="3MI0">
    <property type="method" value="X-ray"/>
    <property type="resolution" value="2.20 A"/>
    <property type="chains" value="1/A/B/D/F/I/K/M/O/Q/S/U/W/Y=1-248"/>
</dbReference>
<dbReference type="PDB" id="3MKA">
    <property type="method" value="X-ray"/>
    <property type="resolution" value="2.51 A"/>
    <property type="chains" value="1/A/B/D/F/I/K/M/O/Q/S/U/W/Y=1-248"/>
</dbReference>
<dbReference type="PDB" id="5LZP">
    <property type="method" value="EM"/>
    <property type="resolution" value="3.45 A"/>
    <property type="chains" value="0/2/4/6/8/B/D/H/J/M/Q/S/W/Y=8-248"/>
</dbReference>
<dbReference type="PDB" id="5THO">
    <property type="method" value="X-ray"/>
    <property type="resolution" value="3.00 A"/>
    <property type="chains" value="A/B/C/D/E/F/G/O/P/Q/R/S/T/U=10-248"/>
</dbReference>
<dbReference type="PDB" id="5TRG">
    <property type="method" value="X-ray"/>
    <property type="resolution" value="2.80 A"/>
    <property type="chains" value="A/B/C/D/E/F/G/O/P/Q/R/S/T/U=10-248"/>
</dbReference>
<dbReference type="PDB" id="5TRR">
    <property type="method" value="X-ray"/>
    <property type="resolution" value="3.10 A"/>
    <property type="chains" value="A/B/C/D/E/F/G/O/P/Q/R/S/T/U=10-248"/>
</dbReference>
<dbReference type="PDB" id="5TRS">
    <property type="method" value="X-ray"/>
    <property type="resolution" value="3.08 A"/>
    <property type="chains" value="A/B/C/D/E/F/G/O/P/Q/R/S/T/U=10-248"/>
</dbReference>
<dbReference type="PDB" id="5TRY">
    <property type="method" value="X-ray"/>
    <property type="resolution" value="3.00 A"/>
    <property type="chains" value="A/B/C/D/E/F/G/O/P/Q/R/S/T/U=10-248"/>
</dbReference>
<dbReference type="PDB" id="5TS0">
    <property type="method" value="X-ray"/>
    <property type="resolution" value="2.85 A"/>
    <property type="chains" value="A/B/C/D/E/F/G/O/P/Q/R/S/T/U=10-248"/>
</dbReference>
<dbReference type="PDB" id="6BGL">
    <property type="method" value="EM"/>
    <property type="resolution" value="3.40 A"/>
    <property type="chains" value="A/C/D/E/F/G/H/I/J/K/L/M/N/O=1-248"/>
</dbReference>
<dbReference type="PDB" id="6BGO">
    <property type="method" value="EM"/>
    <property type="resolution" value="4.20 A"/>
    <property type="chains" value="A/C/D/E/F/G/H/I/J/K/L/M/N/O=1-248"/>
</dbReference>
<dbReference type="PDB" id="6OCW">
    <property type="method" value="X-ray"/>
    <property type="resolution" value="2.60 A"/>
    <property type="chains" value="A/B/C/D/E/F/G/O/P/Q/R/S/T/U=10-248"/>
</dbReference>
<dbReference type="PDB" id="6OCZ">
    <property type="method" value="X-ray"/>
    <property type="resolution" value="2.65 A"/>
    <property type="chains" value="A/B/C/D/E/F/G/O/P/Q/R/S/T/U=10-248"/>
</dbReference>
<dbReference type="PDB" id="6ODE">
    <property type="method" value="X-ray"/>
    <property type="resolution" value="2.90 A"/>
    <property type="chains" value="A/B/C/D/E/F/G/O/P/Q/R/S/T/U=10-248"/>
</dbReference>
<dbReference type="PDB" id="6WNK">
    <property type="method" value="X-ray"/>
    <property type="resolution" value="2.28 A"/>
    <property type="chains" value="A/B/C/D/E/F/G/O/P/Q/R/S/T/U=10-248"/>
</dbReference>
<dbReference type="PDB" id="7PXA">
    <property type="method" value="EM"/>
    <property type="resolution" value="2.80 A"/>
    <property type="chains" value="0/2/4/6/8/I/K/O/Q/T/X/Z/d/f=1-248"/>
</dbReference>
<dbReference type="PDB" id="7PXC">
    <property type="method" value="EM"/>
    <property type="resolution" value="3.84 A"/>
    <property type="chains" value="0/2/4/6/8/I/K/O/Q/T/X/Z/d/f=1-248"/>
</dbReference>
<dbReference type="PDB" id="7PXD">
    <property type="method" value="EM"/>
    <property type="resolution" value="4.00 A"/>
    <property type="chains" value="0/2/4/6/8/I/K/O/Q/T/X/Z/d/f=1-248"/>
</dbReference>
<dbReference type="PDB" id="8D6V">
    <property type="method" value="EM"/>
    <property type="resolution" value="3.20 A"/>
    <property type="chains" value="A/C/D/E/F/G/H/I/J/K/L/M/N/O=1-248"/>
</dbReference>
<dbReference type="PDB" id="8D6W">
    <property type="method" value="EM"/>
    <property type="resolution" value="3.00 A"/>
    <property type="chains" value="A/C/D/E/F/G/H/I/J/K/L/M/N/O=1-248"/>
</dbReference>
<dbReference type="PDB" id="8D6X">
    <property type="method" value="EM"/>
    <property type="resolution" value="3.20 A"/>
    <property type="chains" value="G/H/I/J/K/L/M/N/O/k/l/m/n/o=1-248"/>
</dbReference>
<dbReference type="PDB" id="8D6Y">
    <property type="method" value="EM"/>
    <property type="resolution" value="10.00 A"/>
    <property type="chains" value="G/H/I/J/K/L/M/N/O/k/l/m/n/o=1-248"/>
</dbReference>
<dbReference type="PDB" id="9CE5">
    <property type="method" value="EM"/>
    <property type="resolution" value="2.66 A"/>
    <property type="chains" value="A/B/C/D/E/F/G/H/I/J/K/L/M/N=1-248"/>
</dbReference>
<dbReference type="PDB" id="9CE7">
    <property type="method" value="EM"/>
    <property type="resolution" value="2.72 A"/>
    <property type="chains" value="A/B/C/D/E/F/G/H/I/J/K/L/M/N=6-248"/>
</dbReference>
<dbReference type="PDB" id="9CE8">
    <property type="method" value="EM"/>
    <property type="resolution" value="2.61 A"/>
    <property type="chains" value="A/B/C/D/E/F/G/H/I/J/K/L/M/N=1-248"/>
</dbReference>
<dbReference type="PDB" id="9CEB">
    <property type="method" value="EM"/>
    <property type="resolution" value="2.50 A"/>
    <property type="chains" value="A/B/C/D/E/F/G/H/I/J/K/L/M/N=1-248"/>
</dbReference>
<dbReference type="PDB" id="9CEE">
    <property type="method" value="EM"/>
    <property type="resolution" value="2.89 A"/>
    <property type="chains" value="A/B/C/D/E/F/G/H/I/J/K/L/M/N=1-248"/>
</dbReference>
<dbReference type="PDB" id="9CEG">
    <property type="method" value="EM"/>
    <property type="resolution" value="2.86 A"/>
    <property type="chains" value="A/B/C/D/E/F/G/H/I/J/K/L/M/N=1-248"/>
</dbReference>
<dbReference type="PDBsum" id="2FHG"/>
<dbReference type="PDBsum" id="2FHH"/>
<dbReference type="PDBsum" id="3H6F"/>
<dbReference type="PDBsum" id="3H6I"/>
<dbReference type="PDBsum" id="3HF9"/>
<dbReference type="PDBsum" id="3HFA"/>
<dbReference type="PDBsum" id="3KRD"/>
<dbReference type="PDBsum" id="3MFE"/>
<dbReference type="PDBsum" id="3MI0"/>
<dbReference type="PDBsum" id="3MKA"/>
<dbReference type="PDBsum" id="5LZP"/>
<dbReference type="PDBsum" id="5THO"/>
<dbReference type="PDBsum" id="5TRG"/>
<dbReference type="PDBsum" id="5TRR"/>
<dbReference type="PDBsum" id="5TRS"/>
<dbReference type="PDBsum" id="5TRY"/>
<dbReference type="PDBsum" id="5TS0"/>
<dbReference type="PDBsum" id="6BGL"/>
<dbReference type="PDBsum" id="6BGO"/>
<dbReference type="PDBsum" id="6OCW"/>
<dbReference type="PDBsum" id="6OCZ"/>
<dbReference type="PDBsum" id="6ODE"/>
<dbReference type="PDBsum" id="6WNK"/>
<dbReference type="PDBsum" id="7PXA"/>
<dbReference type="PDBsum" id="7PXC"/>
<dbReference type="PDBsum" id="7PXD"/>
<dbReference type="PDBsum" id="8D6V"/>
<dbReference type="PDBsum" id="8D6W"/>
<dbReference type="PDBsum" id="8D6X"/>
<dbReference type="PDBsum" id="8D6Y"/>
<dbReference type="PDBsum" id="9CE5"/>
<dbReference type="PDBsum" id="9CE7"/>
<dbReference type="PDBsum" id="9CE8"/>
<dbReference type="PDBsum" id="9CEB"/>
<dbReference type="PDBsum" id="9CEE"/>
<dbReference type="PDBsum" id="9CEG"/>
<dbReference type="EMDB" id="EMD-13697"/>
<dbReference type="EMDB" id="EMD-4128"/>
<dbReference type="EMDB" id="EMD-45494"/>
<dbReference type="EMDB" id="EMD-45495"/>
<dbReference type="EMDB" id="EMD-45496"/>
<dbReference type="EMDB" id="EMD-45498"/>
<dbReference type="EMDB" id="EMD-45499"/>
<dbReference type="EMDB" id="EMD-45501"/>
<dbReference type="EMDB" id="EMD-45532"/>
<dbReference type="EMDB" id="EMD-45534"/>
<dbReference type="EMDB" id="EMD-45535"/>
<dbReference type="EMDB" id="EMD-45537"/>
<dbReference type="EMDB" id="EMD-45538"/>
<dbReference type="EMDB" id="EMD-45539"/>
<dbReference type="EMDB" id="EMD-45540"/>
<dbReference type="EMDB" id="EMD-45541"/>
<dbReference type="EMDB" id="EMD-45542"/>
<dbReference type="EMDB" id="EMD-45547"/>
<dbReference type="EMDB" id="EMD-45552"/>
<dbReference type="EMDB" id="EMD-45553"/>
<dbReference type="EMDB" id="EMD-45556"/>
<dbReference type="EMDB" id="EMD-45558"/>
<dbReference type="EMDB" id="EMD-45559"/>
<dbReference type="EMDB" id="EMD-45560"/>
<dbReference type="EMDB" id="EMD-45561"/>
<dbReference type="EMDB" id="EMD-45562"/>
<dbReference type="SMR" id="P9WHU1"/>
<dbReference type="FunCoup" id="P9WHU1">
    <property type="interactions" value="1"/>
</dbReference>
<dbReference type="IntAct" id="P9WHU1">
    <property type="interactions" value="1"/>
</dbReference>
<dbReference type="MINT" id="P9WHU1"/>
<dbReference type="STRING" id="83332.Rv2109c"/>
<dbReference type="DrugBank" id="DB04732">
    <property type="generic name" value="N-(4-MORPHOLINE)CARBONYL-B-(1-NAPHTHYL)-L-ALANINE-L-LEUCINE BORONIC ACID"/>
</dbReference>
<dbReference type="iPTMnet" id="P9WHU1"/>
<dbReference type="PaxDb" id="83332-Rv2109c"/>
<dbReference type="DNASU" id="887538"/>
<dbReference type="GeneID" id="887538"/>
<dbReference type="KEGG" id="mtu:Rv2109c"/>
<dbReference type="KEGG" id="mtv:RVBD_2109c"/>
<dbReference type="TubercuList" id="Rv2109c"/>
<dbReference type="eggNOG" id="COG0638">
    <property type="taxonomic scope" value="Bacteria"/>
</dbReference>
<dbReference type="InParanoid" id="P9WHU1"/>
<dbReference type="OrthoDB" id="9775643at2"/>
<dbReference type="PhylomeDB" id="P9WHU1"/>
<dbReference type="UniPathway" id="UPA00997"/>
<dbReference type="EvolutionaryTrace" id="P9WHU1"/>
<dbReference type="Proteomes" id="UP000001584">
    <property type="component" value="Chromosome"/>
</dbReference>
<dbReference type="GO" id="GO:0005737">
    <property type="term" value="C:cytoplasm"/>
    <property type="evidence" value="ECO:0007669"/>
    <property type="project" value="UniProtKB-SubCell"/>
</dbReference>
<dbReference type="GO" id="GO:0009274">
    <property type="term" value="C:peptidoglycan-based cell wall"/>
    <property type="evidence" value="ECO:0007005"/>
    <property type="project" value="MTBBASE"/>
</dbReference>
<dbReference type="GO" id="GO:0005886">
    <property type="term" value="C:plasma membrane"/>
    <property type="evidence" value="ECO:0007005"/>
    <property type="project" value="MTBBASE"/>
</dbReference>
<dbReference type="GO" id="GO:0019773">
    <property type="term" value="C:proteasome core complex, alpha-subunit complex"/>
    <property type="evidence" value="ECO:0000314"/>
    <property type="project" value="UniProtKB"/>
</dbReference>
<dbReference type="GO" id="GO:0004298">
    <property type="term" value="F:threonine-type endopeptidase activity"/>
    <property type="evidence" value="ECO:0000314"/>
    <property type="project" value="UniProtKB"/>
</dbReference>
<dbReference type="GO" id="GO:0019941">
    <property type="term" value="P:modification-dependent protein catabolic process"/>
    <property type="evidence" value="ECO:0000314"/>
    <property type="project" value="UniProtKB"/>
</dbReference>
<dbReference type="GO" id="GO:0010498">
    <property type="term" value="P:proteasomal protein catabolic process"/>
    <property type="evidence" value="ECO:0000314"/>
    <property type="project" value="UniProtKB"/>
</dbReference>
<dbReference type="GO" id="GO:0043161">
    <property type="term" value="P:proteasome-mediated ubiquitin-dependent protein catabolic process"/>
    <property type="evidence" value="ECO:0000318"/>
    <property type="project" value="GO_Central"/>
</dbReference>
<dbReference type="GO" id="GO:0051603">
    <property type="term" value="P:proteolysis involved in protein catabolic process"/>
    <property type="evidence" value="ECO:0000314"/>
    <property type="project" value="MTBBASE"/>
</dbReference>
<dbReference type="GO" id="GO:0030682">
    <property type="term" value="P:symbiont-mediated perturbation of host defenses"/>
    <property type="evidence" value="ECO:0000315"/>
    <property type="project" value="UniProtKB"/>
</dbReference>
<dbReference type="CDD" id="cd01906">
    <property type="entry name" value="proteasome_protease_HslV"/>
    <property type="match status" value="1"/>
</dbReference>
<dbReference type="FunFam" id="3.60.20.10:FF:000023">
    <property type="entry name" value="Proteasome subunit alpha"/>
    <property type="match status" value="1"/>
</dbReference>
<dbReference type="Gene3D" id="3.60.20.10">
    <property type="entry name" value="Glutamine Phosphoribosylpyrophosphate, subunit 1, domain 1"/>
    <property type="match status" value="1"/>
</dbReference>
<dbReference type="HAMAP" id="MF_00289_B">
    <property type="entry name" value="Proteasome_A_B"/>
    <property type="match status" value="1"/>
</dbReference>
<dbReference type="InterPro" id="IPR029055">
    <property type="entry name" value="Ntn_hydrolases_N"/>
</dbReference>
<dbReference type="InterPro" id="IPR050115">
    <property type="entry name" value="Proteasome_alpha"/>
</dbReference>
<dbReference type="InterPro" id="IPR023332">
    <property type="entry name" value="Proteasome_alpha-type"/>
</dbReference>
<dbReference type="InterPro" id="IPR022296">
    <property type="entry name" value="Proteasome_asu_bac"/>
</dbReference>
<dbReference type="InterPro" id="IPR001353">
    <property type="entry name" value="Proteasome_sua/b"/>
</dbReference>
<dbReference type="NCBIfam" id="TIGR03691">
    <property type="entry name" value="20S_bact_alpha"/>
    <property type="match status" value="1"/>
</dbReference>
<dbReference type="PANTHER" id="PTHR11599">
    <property type="entry name" value="PROTEASOME SUBUNIT ALPHA/BETA"/>
    <property type="match status" value="1"/>
</dbReference>
<dbReference type="Pfam" id="PF00227">
    <property type="entry name" value="Proteasome"/>
    <property type="match status" value="1"/>
</dbReference>
<dbReference type="SUPFAM" id="SSF56235">
    <property type="entry name" value="N-terminal nucleophile aminohydrolases (Ntn hydrolases)"/>
    <property type="match status" value="1"/>
</dbReference>
<dbReference type="PROSITE" id="PS51475">
    <property type="entry name" value="PROTEASOME_ALPHA_2"/>
    <property type="match status" value="1"/>
</dbReference>
<proteinExistence type="evidence at protein level"/>
<feature type="initiator methionine" description="Removed" evidence="6 15">
    <location>
        <position position="1"/>
    </location>
</feature>
<feature type="chain" id="PRO_0000383482" description="Proteasome subunit alpha">
    <location>
        <begin position="2"/>
        <end position="248"/>
    </location>
</feature>
<feature type="modified residue" description="N-acetylserine; partial" evidence="6 15">
    <location>
        <position position="2"/>
    </location>
</feature>
<feature type="modified residue" description="Phosphothreonine" evidence="13">
    <location>
        <position position="84"/>
    </location>
</feature>
<feature type="modified residue" description="Phosphothreonine" evidence="13">
    <location>
        <position position="178"/>
    </location>
</feature>
<feature type="modified residue" description="Phosphothreonine" evidence="13">
    <location>
        <position position="202"/>
    </location>
</feature>
<feature type="mutagenesis site" description="Markedly increases peptidolytic activity. Disappearance of the apparent obstruction in alpha rings. Designated open-gate mutant." evidence="3">
    <location>
        <begin position="1"/>
        <end position="8"/>
    </location>
</feature>
<feature type="helix" evidence="18">
    <location>
        <begin position="9"/>
        <end position="25"/>
    </location>
</feature>
<feature type="strand" evidence="18">
    <location>
        <begin position="30"/>
        <end position="35"/>
    </location>
</feature>
<feature type="strand" evidence="18">
    <location>
        <begin position="38"/>
        <end position="44"/>
    </location>
</feature>
<feature type="strand" evidence="18">
    <location>
        <begin position="48"/>
        <end position="50"/>
    </location>
</feature>
<feature type="strand" evidence="18">
    <location>
        <begin position="52"/>
        <end position="57"/>
    </location>
</feature>
<feature type="strand" evidence="18">
    <location>
        <begin position="60"/>
        <end position="66"/>
    </location>
</feature>
<feature type="helix" evidence="18">
    <location>
        <begin position="68"/>
        <end position="88"/>
    </location>
</feature>
<feature type="helix" evidence="18">
    <location>
        <begin position="91"/>
        <end position="93"/>
    </location>
</feature>
<feature type="helix" evidence="18">
    <location>
        <begin position="96"/>
        <end position="113"/>
    </location>
</feature>
<feature type="strand" evidence="18">
    <location>
        <begin position="114"/>
        <end position="116"/>
    </location>
</feature>
<feature type="strand" evidence="18">
    <location>
        <begin position="120"/>
        <end position="126"/>
    </location>
</feature>
<feature type="strand" evidence="16">
    <location>
        <begin position="130"/>
        <end position="132"/>
    </location>
</feature>
<feature type="strand" evidence="18">
    <location>
        <begin position="137"/>
        <end position="141"/>
    </location>
</feature>
<feature type="strand" evidence="18">
    <location>
        <begin position="147"/>
        <end position="158"/>
    </location>
</feature>
<feature type="helix" evidence="18">
    <location>
        <begin position="160"/>
        <end position="170"/>
    </location>
</feature>
<feature type="helix" evidence="17">
    <location>
        <begin position="171"/>
        <end position="173"/>
    </location>
</feature>
<feature type="helix" evidence="18">
    <location>
        <begin position="177"/>
        <end position="190"/>
    </location>
</feature>
<feature type="helix" evidence="19">
    <location>
        <begin position="205"/>
        <end position="207"/>
    </location>
</feature>
<feature type="strand" evidence="18">
    <location>
        <begin position="208"/>
        <end position="214"/>
    </location>
</feature>
<feature type="strand" evidence="18">
    <location>
        <begin position="217"/>
        <end position="219"/>
    </location>
</feature>
<feature type="strand" evidence="18">
    <location>
        <begin position="222"/>
        <end position="224"/>
    </location>
</feature>
<feature type="helix" evidence="18">
    <location>
        <begin position="227"/>
        <end position="232"/>
    </location>
</feature>
<accession>P9WHU1</accession>
<accession>L0T8P4</accession>
<accession>O33244</accession>
<accession>Q7D7I3</accession>
<name>PSA_MYCTU</name>
<keyword id="KW-0002">3D-structure</keyword>
<keyword id="KW-0007">Acetylation</keyword>
<keyword id="KW-0963">Cytoplasm</keyword>
<keyword id="KW-0903">Direct protein sequencing</keyword>
<keyword id="KW-0597">Phosphoprotein</keyword>
<keyword id="KW-0647">Proteasome</keyword>
<keyword id="KW-1185">Reference proteome</keyword>
<keyword id="KW-0843">Virulence</keyword>
<gene>
    <name evidence="2" type="primary">prcA</name>
    <name type="ordered locus">Rv2109c</name>
</gene>
<protein>
    <recommendedName>
        <fullName evidence="2">Proteasome subunit alpha</fullName>
    </recommendedName>
    <alternativeName>
        <fullName evidence="2">20S proteasome alpha subunit</fullName>
    </alternativeName>
    <alternativeName>
        <fullName evidence="2">Proteasome core protein PrcA</fullName>
    </alternativeName>
</protein>
<reference key="1">
    <citation type="journal article" date="1998" name="Nature">
        <title>Deciphering the biology of Mycobacterium tuberculosis from the complete genome sequence.</title>
        <authorList>
            <person name="Cole S.T."/>
            <person name="Brosch R."/>
            <person name="Parkhill J."/>
            <person name="Garnier T."/>
            <person name="Churcher C.M."/>
            <person name="Harris D.E."/>
            <person name="Gordon S.V."/>
            <person name="Eiglmeier K."/>
            <person name="Gas S."/>
            <person name="Barry C.E. III"/>
            <person name="Tekaia F."/>
            <person name="Badcock K."/>
            <person name="Basham D."/>
            <person name="Brown D."/>
            <person name="Chillingworth T."/>
            <person name="Connor R."/>
            <person name="Davies R.M."/>
            <person name="Devlin K."/>
            <person name="Feltwell T."/>
            <person name="Gentles S."/>
            <person name="Hamlin N."/>
            <person name="Holroyd S."/>
            <person name="Hornsby T."/>
            <person name="Jagels K."/>
            <person name="Krogh A."/>
            <person name="McLean J."/>
            <person name="Moule S."/>
            <person name="Murphy L.D."/>
            <person name="Oliver S."/>
            <person name="Osborne J."/>
            <person name="Quail M.A."/>
            <person name="Rajandream M.A."/>
            <person name="Rogers J."/>
            <person name="Rutter S."/>
            <person name="Seeger K."/>
            <person name="Skelton S."/>
            <person name="Squares S."/>
            <person name="Squares R."/>
            <person name="Sulston J.E."/>
            <person name="Taylor K."/>
            <person name="Whitehead S."/>
            <person name="Barrell B.G."/>
        </authorList>
    </citation>
    <scope>NUCLEOTIDE SEQUENCE [LARGE SCALE GENOMIC DNA]</scope>
    <source>
        <strain>ATCC 25618 / H37Rv</strain>
    </source>
</reference>
<reference key="2">
    <citation type="journal article" date="2006" name="Mol. Microbiol.">
        <title>Mycobacterium tuberculosis prcBA genes encode a gated proteasome with broad oligopeptide specificity.</title>
        <authorList>
            <person name="Lin G."/>
            <person name="Hu G."/>
            <person name="Tsu C."/>
            <person name="Kunes Y.Z."/>
            <person name="Li H."/>
            <person name="Dick L."/>
            <person name="Parsons T."/>
            <person name="Li P."/>
            <person name="Chen Z."/>
            <person name="Zwickl P."/>
            <person name="Weich N."/>
            <person name="Nathan C."/>
        </authorList>
    </citation>
    <scope>PROTEIN SEQUENCE OF N-TERMINUS</scope>
    <scope>FUNCTION</scope>
    <scope>CATALYTIC ACTIVITY</scope>
    <scope>SUBSTRATE SPECIFICITY</scope>
    <scope>SUBUNIT</scope>
    <scope>ACTIVITY REGULATION</scope>
    <scope>KINETIC PARAMETERS</scope>
    <scope>MUTAGENESIS OF 1-MET--SER-8</scope>
    <source>
        <strain>ATCC 25618 / H37Rv</strain>
    </source>
</reference>
<reference key="3">
    <citation type="journal article" date="2006" name="EMBO J.">
        <title>Identification of substrates of the Mycobacterium tuberculosis proteasome.</title>
        <authorList>
            <person name="Pearce M.J."/>
            <person name="Arora P."/>
            <person name="Festa R.A."/>
            <person name="Butler-Wu S.M."/>
            <person name="Gokhale R.S."/>
            <person name="Darwin K.H."/>
        </authorList>
    </citation>
    <scope>PROTEIN SUBSTRATES</scope>
    <source>
        <strain>ATCC 25618 / H37Rv</strain>
    </source>
</reference>
<reference key="4">
    <citation type="journal article" date="2007" name="Microbiology">
        <title>Experimental determination of translational starts using peptide mass mapping and tandem mass spectrometry within the proteome of Mycobacterium tuberculosis.</title>
        <authorList>
            <person name="Rison S.C."/>
            <person name="Mattow J."/>
            <person name="Jungblut P.R."/>
            <person name="Stoker N.G."/>
        </authorList>
    </citation>
    <scope>IDENTIFICATION BY MASS SPECTROMETRY</scope>
    <scope>DETERMINATION OF TRANSLATIONAL START SITE</scope>
    <scope>CLEAVAGE OF INITIATOR METHIONINE</scope>
    <scope>ACETYLATION AT SER-2</scope>
    <source>
        <strain>ATCC 25618 / H37Rv</strain>
    </source>
</reference>
<reference key="5">
    <citation type="journal article" date="2007" name="Nat. Med.">
        <title>In vivo gene silencing identifies the Mycobacterium tuberculosis proteasome as essential for the bacteria to persist in mice.</title>
        <authorList>
            <person name="Gandotra S."/>
            <person name="Schnappinger D."/>
            <person name="Monteleone M."/>
            <person name="Hillen W."/>
            <person name="Ehrt S."/>
        </authorList>
    </citation>
    <scope>ROLE IN VIRULENCE</scope>
    <scope>DISRUPTION PHENOTYPE</scope>
    <source>
        <strain>ATCC 25618 / H37Rv</strain>
    </source>
</reference>
<reference key="6">
    <citation type="journal article" date="2008" name="BMC Syst. Biol.">
        <title>targetTB: a target identification pipeline for Mycobacterium tuberculosis through an interactome, reactome and genome-scale structural analysis.</title>
        <authorList>
            <person name="Raman K."/>
            <person name="Yeturu K."/>
            <person name="Chandra N."/>
        </authorList>
    </citation>
    <scope>IDENTIFICATION AS A DRUG TARGET [LARGE SCALE ANALYSIS]</scope>
</reference>
<reference key="7">
    <citation type="journal article" date="2011" name="Mol. Cell. Proteomics">
        <title>Proteogenomic analysis of Mycobacterium tuberculosis by high resolution mass spectrometry.</title>
        <authorList>
            <person name="Kelkar D.S."/>
            <person name="Kumar D."/>
            <person name="Kumar P."/>
            <person name="Balakrishnan L."/>
            <person name="Muthusamy B."/>
            <person name="Yadav A.K."/>
            <person name="Shrivastava P."/>
            <person name="Marimuthu A."/>
            <person name="Anand S."/>
            <person name="Sundaram H."/>
            <person name="Kingsbury R."/>
            <person name="Harsha H.C."/>
            <person name="Nair B."/>
            <person name="Prasad T.S."/>
            <person name="Chauhan D.S."/>
            <person name="Katoch K."/>
            <person name="Katoch V.M."/>
            <person name="Kumar P."/>
            <person name="Chaerkady R."/>
            <person name="Ramachandran S."/>
            <person name="Dash D."/>
            <person name="Pandey A."/>
        </authorList>
    </citation>
    <scope>ACETYLATION [LARGE SCALE ANALYSIS] AT SER-2</scope>
    <scope>CLEAVAGE OF INITIATOR METHIONINE [LARGE SCALE ANALYSIS]</scope>
    <scope>IDENTIFICATION BY MASS SPECTROMETRY [LARGE SCALE ANALYSIS]</scope>
    <source>
        <strain>ATCC 25618 / H37Rv</strain>
    </source>
</reference>
<reference key="8">
    <citation type="journal article" date="2010" name="FEBS Lett.">
        <title>Stoichiometric protein complex formation and over-expression using the prokaryotic native operon structure.</title>
        <authorList>
            <person name="Poulsen C."/>
            <person name="Holton S."/>
            <person name="Geerlof A."/>
            <person name="Wilmanns M."/>
            <person name="Song Y.H."/>
        </authorList>
    </citation>
    <scope>ELECTRON MICROSCOPY</scope>
    <scope>SUBUNIT</scope>
    <source>
        <strain>ATCC 25618 / H37Rv</strain>
    </source>
</reference>
<reference key="9">
    <citation type="journal article" date="2010" name="PLoS Pathog.">
        <title>The Mycobacterium tuberculosis proteasome active site threonine is essential for persistence yet dispensable for replication and resistance to nitric oxide.</title>
        <authorList>
            <person name="Gandotra S."/>
            <person name="Lebron M.B."/>
            <person name="Ehrt S."/>
        </authorList>
    </citation>
    <scope>ROLE IN PERSISTENCE</scope>
    <scope>DISRUPTION PHENOTYPE</scope>
    <source>
        <strain>H37Rv</strain>
    </source>
</reference>
<reference key="10">
    <citation type="journal article" date="2014" name="J. Microbiol.">
        <title>Phosphorylation regulates mycobacterial proteasome.</title>
        <authorList>
            <person name="Anandan T."/>
            <person name="Han J."/>
            <person name="Baun H."/>
            <person name="Nyayapathy S."/>
            <person name="Brown J.T."/>
            <person name="Dial R.L."/>
            <person name="Moltalvo J.A."/>
            <person name="Kim M.S."/>
            <person name="Yang S.H."/>
            <person name="Ronning D.R."/>
            <person name="Husson R.N."/>
            <person name="Suh J."/>
            <person name="Kang C.M."/>
        </authorList>
    </citation>
    <scope>PHOSPHORYLATION AT THR-84; THR-178 AND THR-202</scope>
    <source>
        <strain>H37Rv</strain>
    </source>
</reference>
<reference key="11">
    <citation type="journal article" date="2014" name="PLoS ONE">
        <title>Bacterial proteasome activator Bpa (Rv3780) is a novel ring-shaped interactor of the mycobacterial proteasome.</title>
        <authorList>
            <person name="Delley C.L."/>
            <person name="Laederach J."/>
            <person name="Ziemski M."/>
            <person name="Bolten M."/>
            <person name="Boehringer D."/>
            <person name="Weber-Ban E."/>
        </authorList>
    </citation>
    <scope>INTERACTION WITH BPA</scope>
    <source>
        <strain>ATCC 25618 / H37Rv</strain>
    </source>
</reference>
<reference key="12">
    <citation type="journal article" date="2006" name="Mol. Microbiol.">
        <title>Structure of the Mycobacterium tuberculosis proteasome and mechanism of inhibition by a peptidyl boronate.</title>
        <authorList>
            <person name="Hu G."/>
            <person name="Lin G."/>
            <person name="Wang M."/>
            <person name="Dick L."/>
            <person name="Xu R.-M."/>
            <person name="Nathan C."/>
            <person name="Li H."/>
        </authorList>
    </citation>
    <scope>X-RAY CRYSTALLOGRAPHY (2.99 ANGSTROMS) OF 2-248 IN COMPLEXES WITH THE BETA SUBUNIT AND WITH THE MLN-273 INHIBITOR</scope>
    <scope>SUBUNIT</scope>
    <source>
        <strain>ATCC 25618 / H37Rv</strain>
    </source>
</reference>
<reference key="13">
    <citation type="journal article" date="2009" name="Nature">
        <title>Inhibitors selective for mycobacterial versus human proteasomes.</title>
        <authorList>
            <person name="Lin G."/>
            <person name="Li D."/>
            <person name="de Carvalho L.P."/>
            <person name="Deng H."/>
            <person name="Tao H."/>
            <person name="Vogt G."/>
            <person name="Wu K."/>
            <person name="Schneider J."/>
            <person name="Chidawanyika T."/>
            <person name="Warren J.D."/>
            <person name="Li H."/>
            <person name="Nathan C."/>
        </authorList>
    </citation>
    <scope>X-RAY CRYSTALLOGRAPHY (2.43 ANGSTROMS) OF WILD-TYPE AND OPEN-GATE MUTANT IN COMPLEXES WITH BETA SUBUNIT; INHIBITOR HT1171 AND INHIBITOR GL1</scope>
    <scope>ACTIVITY REGULATION</scope>
    <scope>BIOTECHNOLOGY</scope>
    <source>
        <strain>ATCC 25618 / H37Rv</strain>
    </source>
</reference>
<reference key="14">
    <citation type="journal article" date="2010" name="Arch. Biochem. Biophys.">
        <title>Fellutamide B is a potent inhibitor of the Mycobacterium tuberculosis proteasome.</title>
        <authorList>
            <person name="Lin G."/>
            <person name="Li D."/>
            <person name="Chidawanyika T."/>
            <person name="Nathan C."/>
            <person name="Li H."/>
        </authorList>
    </citation>
    <scope>X-RAY CRYSTALLOGRAPHY (2.50 ANGSTROMS) IN COMPLEX WITH BETA SUBUNIT AND FELLUTAMIDE B INHIBITOR</scope>
    <scope>ACTIVITY REGULATION</scope>
</reference>
<reference key="15">
    <citation type="journal article" date="2010" name="EMBO J.">
        <title>Structural basis for the assembly and gate closure mechanisms of the Mycobacterium tuberculosis 20S proteasome.</title>
        <authorList>
            <person name="Li D."/>
            <person name="Li H."/>
            <person name="Wang T."/>
            <person name="Pan H."/>
            <person name="Lin G."/>
            <person name="Li H."/>
        </authorList>
    </citation>
    <scope>X-RAY CRYSTALLOGRAPHY (2.20 ANGSTROMS) OF WILD-TYPE AND OPEN-GATE MUTANT IN COMPLEX WITH BETA SUBUNIT</scope>
    <scope>SUBUNIT</scope>
    <scope>GATED STRUCTURE</scope>
    <scope>PROTEASOME ASSEMBLY PROCESS</scope>
    <source>
        <strain>ATCC 25618 / H37Rv</strain>
    </source>
</reference>